<evidence type="ECO:0000255" key="1">
    <source>
        <dbReference type="HAMAP-Rule" id="MF_01077"/>
    </source>
</evidence>
<accession>B1MD92</accession>
<dbReference type="EMBL" id="CU458896">
    <property type="protein sequence ID" value="CAM63213.1"/>
    <property type="molecule type" value="Genomic_DNA"/>
</dbReference>
<dbReference type="RefSeq" id="WP_005093836.1">
    <property type="nucleotide sequence ID" value="NZ_MLCG01000003.1"/>
</dbReference>
<dbReference type="SMR" id="B1MD92"/>
<dbReference type="GeneID" id="93380068"/>
<dbReference type="KEGG" id="mab:MAB_3136c"/>
<dbReference type="Proteomes" id="UP000007137">
    <property type="component" value="Chromosome"/>
</dbReference>
<dbReference type="GO" id="GO:0005829">
    <property type="term" value="C:cytosol"/>
    <property type="evidence" value="ECO:0007669"/>
    <property type="project" value="TreeGrafter"/>
</dbReference>
<dbReference type="GO" id="GO:0000028">
    <property type="term" value="P:ribosomal small subunit assembly"/>
    <property type="evidence" value="ECO:0007669"/>
    <property type="project" value="TreeGrafter"/>
</dbReference>
<dbReference type="GO" id="GO:0006412">
    <property type="term" value="P:translation"/>
    <property type="evidence" value="ECO:0007669"/>
    <property type="project" value="TreeGrafter"/>
</dbReference>
<dbReference type="Gene3D" id="3.30.300.70">
    <property type="entry name" value="RimP-like superfamily, N-terminal"/>
    <property type="match status" value="1"/>
</dbReference>
<dbReference type="HAMAP" id="MF_01077">
    <property type="entry name" value="RimP"/>
    <property type="match status" value="1"/>
</dbReference>
<dbReference type="InterPro" id="IPR003728">
    <property type="entry name" value="Ribosome_maturation_RimP"/>
</dbReference>
<dbReference type="InterPro" id="IPR028989">
    <property type="entry name" value="RimP_N"/>
</dbReference>
<dbReference type="InterPro" id="IPR035956">
    <property type="entry name" value="RimP_N_sf"/>
</dbReference>
<dbReference type="NCBIfam" id="NF000930">
    <property type="entry name" value="PRK00092.2-2"/>
    <property type="match status" value="1"/>
</dbReference>
<dbReference type="PANTHER" id="PTHR33867">
    <property type="entry name" value="RIBOSOME MATURATION FACTOR RIMP"/>
    <property type="match status" value="1"/>
</dbReference>
<dbReference type="PANTHER" id="PTHR33867:SF1">
    <property type="entry name" value="RIBOSOME MATURATION FACTOR RIMP"/>
    <property type="match status" value="1"/>
</dbReference>
<dbReference type="Pfam" id="PF02576">
    <property type="entry name" value="RimP_N"/>
    <property type="match status" value="1"/>
</dbReference>
<dbReference type="SUPFAM" id="SSF75420">
    <property type="entry name" value="YhbC-like, N-terminal domain"/>
    <property type="match status" value="1"/>
</dbReference>
<organism>
    <name type="scientific">Mycobacteroides abscessus (strain ATCC 19977 / DSM 44196 / CCUG 20993 / CIP 104536 / JCM 13569 / NCTC 13031 / TMC 1543 / L948)</name>
    <name type="common">Mycobacterium abscessus</name>
    <dbReference type="NCBI Taxonomy" id="561007"/>
    <lineage>
        <taxon>Bacteria</taxon>
        <taxon>Bacillati</taxon>
        <taxon>Actinomycetota</taxon>
        <taxon>Actinomycetes</taxon>
        <taxon>Mycobacteriales</taxon>
        <taxon>Mycobacteriaceae</taxon>
        <taxon>Mycobacteroides</taxon>
        <taxon>Mycobacteroides abscessus</taxon>
    </lineage>
</organism>
<name>RIMP_MYCA9</name>
<gene>
    <name evidence="1" type="primary">rimP</name>
    <name type="ordered locus">MAB_3136c</name>
</gene>
<proteinExistence type="inferred from homology"/>
<keyword id="KW-0963">Cytoplasm</keyword>
<keyword id="KW-1185">Reference proteome</keyword>
<keyword id="KW-0690">Ribosome biogenesis</keyword>
<sequence>MPDPLDPSDSSTGLPSDDQVLELLAPEFSRSGVEIESVVVSDGGVAGRPSRIAVVVDSDTPVDLDAVAGLSRTASALLDEADTGWQAYELEITTPGVDRPLTTVAHFRRAHLRLAQIRLTNGEDLLGRIGITHDDGVQVVLRKPIKGTGWTVRDLAFSDIESAVVQVEFNTPNPQELNLAGAAETGGGA</sequence>
<feature type="chain" id="PRO_0000384708" description="Ribosome maturation factor RimP">
    <location>
        <begin position="1"/>
        <end position="189"/>
    </location>
</feature>
<protein>
    <recommendedName>
        <fullName evidence="1">Ribosome maturation factor RimP</fullName>
    </recommendedName>
</protein>
<comment type="function">
    <text evidence="1">Required for maturation of 30S ribosomal subunits.</text>
</comment>
<comment type="subcellular location">
    <subcellularLocation>
        <location evidence="1">Cytoplasm</location>
    </subcellularLocation>
</comment>
<comment type="similarity">
    <text evidence="1">Belongs to the RimP family.</text>
</comment>
<reference key="1">
    <citation type="journal article" date="2009" name="PLoS ONE">
        <title>Non mycobacterial virulence genes in the genome of the emerging pathogen Mycobacterium abscessus.</title>
        <authorList>
            <person name="Ripoll F."/>
            <person name="Pasek S."/>
            <person name="Schenowitz C."/>
            <person name="Dossat C."/>
            <person name="Barbe V."/>
            <person name="Rottman M."/>
            <person name="Macheras E."/>
            <person name="Heym B."/>
            <person name="Herrmann J.L."/>
            <person name="Daffe M."/>
            <person name="Brosch R."/>
            <person name="Risler J.L."/>
            <person name="Gaillard J.L."/>
        </authorList>
    </citation>
    <scope>NUCLEOTIDE SEQUENCE [LARGE SCALE GENOMIC DNA]</scope>
    <source>
        <strain>ATCC 19977 / DSM 44196 / CCUG 20993 / CIP 104536 / JCM 13569 / NCTC 13031 / TMC 1543 / L948</strain>
    </source>
</reference>